<protein>
    <recommendedName>
        <fullName evidence="4">L-amino-acid oxidase Bco23</fullName>
        <shortName>LAAO</shortName>
        <shortName evidence="4">LAO</shortName>
        <ecNumber evidence="2">1.4.3.2</ecNumber>
    </recommendedName>
</protein>
<sequence>ADDRNPLEECFRETD</sequence>
<reference key="1">
    <citation type="journal article" date="2008" name="J. Proteomics">
        <title>Snake venomics of the Brazilian pitvipers Bothrops cotiara and Bothrops fonsecai. Identification of taxonomy markers.</title>
        <authorList>
            <person name="Tashima A.K."/>
            <person name="Sanz L."/>
            <person name="Camargo A.C."/>
            <person name="Serrano S.M."/>
            <person name="Calvete J.J."/>
        </authorList>
    </citation>
    <scope>PROTEIN SEQUENCE</scope>
    <scope>IDENTIFICATION BY MASS SPECTROMETRY</scope>
    <scope>SUBCELLULAR LOCATION</scope>
    <source>
        <tissue>Venom</tissue>
    </source>
</reference>
<organism>
    <name type="scientific">Bothrops cotiara</name>
    <name type="common">Cotiara</name>
    <name type="synonym">Rhinocerophis cotiara</name>
    <dbReference type="NCBI Taxonomy" id="8727"/>
    <lineage>
        <taxon>Eukaryota</taxon>
        <taxon>Metazoa</taxon>
        <taxon>Chordata</taxon>
        <taxon>Craniata</taxon>
        <taxon>Vertebrata</taxon>
        <taxon>Euteleostomi</taxon>
        <taxon>Lepidosauria</taxon>
        <taxon>Squamata</taxon>
        <taxon>Bifurcata</taxon>
        <taxon>Unidentata</taxon>
        <taxon>Episquamata</taxon>
        <taxon>Toxicofera</taxon>
        <taxon>Serpentes</taxon>
        <taxon>Colubroidea</taxon>
        <taxon>Viperidae</taxon>
        <taxon>Crotalinae</taxon>
        <taxon>Bothrops</taxon>
    </lineage>
</organism>
<feature type="chain" id="PRO_0000428808" description="L-amino-acid oxidase Bco23">
    <location>
        <begin position="1"/>
        <end position="15" status="greater than"/>
    </location>
</feature>
<feature type="non-terminal residue" evidence="4">
    <location>
        <position position="15"/>
    </location>
</feature>
<evidence type="ECO:0000250" key="1">
    <source>
        <dbReference type="UniProtKB" id="P0CC17"/>
    </source>
</evidence>
<evidence type="ECO:0000250" key="2">
    <source>
        <dbReference type="UniProtKB" id="P81382"/>
    </source>
</evidence>
<evidence type="ECO:0000269" key="3">
    <source>
    </source>
</evidence>
<evidence type="ECO:0000303" key="4">
    <source>
    </source>
</evidence>
<evidence type="ECO:0000305" key="5"/>
<evidence type="ECO:0000305" key="6">
    <source>
    </source>
</evidence>
<proteinExistence type="evidence at protein level"/>
<dbReference type="EC" id="1.4.3.2" evidence="2"/>
<dbReference type="GO" id="GO:0005576">
    <property type="term" value="C:extracellular region"/>
    <property type="evidence" value="ECO:0007669"/>
    <property type="project" value="UniProtKB-SubCell"/>
</dbReference>
<dbReference type="GO" id="GO:0001716">
    <property type="term" value="F:L-amino-acid oxidase activity"/>
    <property type="evidence" value="ECO:0007669"/>
    <property type="project" value="UniProtKB-EC"/>
</dbReference>
<dbReference type="GO" id="GO:0090729">
    <property type="term" value="F:toxin activity"/>
    <property type="evidence" value="ECO:0007669"/>
    <property type="project" value="UniProtKB-KW"/>
</dbReference>
<dbReference type="GO" id="GO:0006915">
    <property type="term" value="P:apoptotic process"/>
    <property type="evidence" value="ECO:0007669"/>
    <property type="project" value="UniProtKB-KW"/>
</dbReference>
<dbReference type="GO" id="GO:0031640">
    <property type="term" value="P:killing of cells of another organism"/>
    <property type="evidence" value="ECO:0007669"/>
    <property type="project" value="UniProtKB-KW"/>
</dbReference>
<name>OXLA_BOTCO</name>
<accession>P0DMG8</accession>
<keyword id="KW-0053">Apoptosis</keyword>
<keyword id="KW-0204">Cytolysis</keyword>
<keyword id="KW-0903">Direct protein sequencing</keyword>
<keyword id="KW-1015">Disulfide bond</keyword>
<keyword id="KW-0274">FAD</keyword>
<keyword id="KW-0285">Flavoprotein</keyword>
<keyword id="KW-0325">Glycoprotein</keyword>
<keyword id="KW-0354">Hemolysis</keyword>
<keyword id="KW-1199">Hemostasis impairing toxin</keyword>
<keyword id="KW-0560">Oxidoreductase</keyword>
<keyword id="KW-0964">Secreted</keyword>
<keyword id="KW-0800">Toxin</keyword>
<comment type="function">
    <text evidence="1">Catalyzes an oxidative deamination of predominantly hydrophobic and aromatic L-amino acids, thus producing hydrogen peroxide that may contribute to the diverse toxic effects of this enzyme. Exhibits diverse biological activities, such as hemorrhage, hemolysis, edema, apoptosis of vascular endothelial cells or tumor cell lines, antibacterial and antiparasitic activities, as well as regulation of platelet aggregation. Effects of snake L-amino oxidases on platelets are controversial, since they either induce aggregation or inhibit agonist-induced aggregation. These different effects are probably due to different experimental conditions.</text>
</comment>
<comment type="catalytic activity">
    <reaction evidence="2">
        <text>an L-alpha-amino acid + O2 + H2O = a 2-oxocarboxylate + H2O2 + NH4(+)</text>
        <dbReference type="Rhea" id="RHEA:13781"/>
        <dbReference type="ChEBI" id="CHEBI:15377"/>
        <dbReference type="ChEBI" id="CHEBI:15379"/>
        <dbReference type="ChEBI" id="CHEBI:16240"/>
        <dbReference type="ChEBI" id="CHEBI:28938"/>
        <dbReference type="ChEBI" id="CHEBI:35179"/>
        <dbReference type="ChEBI" id="CHEBI:59869"/>
        <dbReference type="EC" id="1.4.3.2"/>
    </reaction>
</comment>
<comment type="cofactor">
    <cofactor evidence="2">
        <name>FAD</name>
        <dbReference type="ChEBI" id="CHEBI:57692"/>
    </cofactor>
</comment>
<comment type="subunit">
    <text evidence="2">Homodimer; non-covalently linked.</text>
</comment>
<comment type="subcellular location">
    <subcellularLocation>
        <location evidence="3">Secreted</location>
    </subcellularLocation>
</comment>
<comment type="tissue specificity">
    <text evidence="6">Expressed by the venom gland.</text>
</comment>
<comment type="PTM">
    <text evidence="2">Contains 2 disulfide bonds.</text>
</comment>
<comment type="PTM">
    <text evidence="2">N-glycosylated.</text>
</comment>
<comment type="similarity">
    <text evidence="5">Belongs to the flavin monoamine oxidase family. FIG1 subfamily.</text>
</comment>